<evidence type="ECO:0000255" key="1">
    <source>
        <dbReference type="HAMAP-Rule" id="MF_04200"/>
    </source>
</evidence>
<evidence type="ECO:0000255" key="2">
    <source>
        <dbReference type="PROSITE-ProRule" id="PRU01271"/>
    </source>
</evidence>
<evidence type="ECO:0000255" key="3">
    <source>
        <dbReference type="PROSITE-ProRule" id="PRU01272"/>
    </source>
</evidence>
<evidence type="ECO:0000269" key="4">
    <source>
    </source>
</evidence>
<evidence type="ECO:0000269" key="5">
    <source>
    </source>
</evidence>
<protein>
    <recommendedName>
        <fullName evidence="1">Spike glycoprotein</fullName>
        <shortName evidence="1">S glycoprotein</shortName>
    </recommendedName>
    <alternativeName>
        <fullName evidence="1">E2</fullName>
    </alternativeName>
    <alternativeName>
        <fullName evidence="1">Peplomer protein</fullName>
    </alternativeName>
</protein>
<accession>P10033</accession>
<accession>Q4U5G0</accession>
<accession>Q52PA3</accession>
<gene>
    <name evidence="1" type="primary">S</name>
    <name type="ORF">2</name>
</gene>
<comment type="function">
    <text evidence="1">S1 region attaches the virion to the cell membrane by interacting with host ANPEP/aminopeptidase N, initiating the infection. Binding to the receptor probably induces conformational changes in the S glycoprotein unmasking the fusion peptide of S2 region and activating membranes fusion. S2 region belongs to the class I viral fusion protein. Under the current model, the protein has at least 3 conformational states: pre-fusion native state, pre-hairpin intermediate state, and post-fusion hairpin state. During viral and target cell membrane fusion, the coiled coil regions (heptad repeats) regions assume a trimer-of-hairpins structure, positioning the fusion peptide in close proximity to the C-terminal region of the ectodomain. The formation of this structure appears to drive apposition and subsequent fusion of viral and target cell membranes.</text>
</comment>
<comment type="subunit">
    <text evidence="1 4 5">Homotrimer. During virus morphogenesis, found in a complex with M and HE proteins. Interacts with host ANPEP.</text>
</comment>
<comment type="subcellular location">
    <subcellularLocation>
        <location evidence="1">Virion membrane</location>
        <topology evidence="1">Single-pass type I membrane protein</topology>
    </subcellularLocation>
    <subcellularLocation>
        <location evidence="1">Host endoplasmic reticulum-Golgi intermediate compartment membrane</location>
        <topology evidence="1">Single-pass type I membrane protein</topology>
    </subcellularLocation>
    <text evidence="1">Accumulates in the endoplasmic reticulum-Golgi intermediate compartment, where it participates in virus particle assembly.</text>
</comment>
<comment type="domain">
    <text evidence="1">The KxHxx motif seems to function as an ER retrieval signal.</text>
</comment>
<comment type="similarity">
    <text evidence="1">Belongs to the alphacoronaviruses spike protein family.</text>
</comment>
<comment type="caution">
    <text evidence="1">In contrast to beta- and gammacoronaviruses, S glycoprotein is not cleaved into S1 and S2.</text>
</comment>
<reference key="1">
    <citation type="journal article" date="1987" name="J. Gen. Virol.">
        <title>cDNA cloning and sequence analysis of the gene encoding the peplomer protein of feline infectious peritonitis virus.</title>
        <authorList>
            <person name="de Groot R.J."/>
            <person name="Maduro J."/>
            <person name="Lenstra J.A."/>
            <person name="Horzinek M.C."/>
            <person name="van der Zeijst B.A.M."/>
            <person name="Spaan W.J.M."/>
        </authorList>
    </citation>
    <scope>NUCLEOTIDE SEQUENCE [GENOMIC RNA]</scope>
</reference>
<reference key="2">
    <citation type="journal article" date="2005" name="J. Gen. Virol.">
        <title>Genomic RNA sequence of Feline coronavirus strain FIPV WSU-79/1146.</title>
        <authorList>
            <person name="Dye C."/>
            <person name="Siddell S.G."/>
        </authorList>
    </citation>
    <scope>NUCLEOTIDE SEQUENCE [GENOMIC RNA]</scope>
</reference>
<reference key="3">
    <citation type="submission" date="2005-03" db="EMBL/GenBank/DDBJ databases">
        <authorList>
            <person name="Haijema B.J."/>
            <person name="de Groot-Mijnes J.D.F."/>
            <person name="Vennema H."/>
            <person name="Raamsman M.J."/>
            <person name="Rottier P.J.M."/>
            <person name="de Groot R.J."/>
        </authorList>
    </citation>
    <scope>NUCLEOTIDE SEQUENCE [GENOMIC RNA]</scope>
</reference>
<reference key="4">
    <citation type="journal article" date="2000" name="J. Virol.">
        <title>Assembly of spikes into coronavirus particles is mediated by the carboxy-terminal domain of the spike protein.</title>
        <authorList>
            <person name="Godeke G.J."/>
            <person name="de Haan C.A."/>
            <person name="Rossen J.W."/>
            <person name="Vennema H."/>
            <person name="Rottier P.J."/>
        </authorList>
    </citation>
    <scope>INTERACTION WITH M PROTEIN</scope>
</reference>
<reference key="5">
    <citation type="journal article" date="1996" name="J. Virol.">
        <title>Feline aminopeptidase N serves as a receptor for feline, canine, porcine, and human coronaviruses in serogroup I.</title>
        <authorList>
            <person name="Tresnan D.B."/>
            <person name="Levis R."/>
            <person name="Holmes K.V."/>
        </authorList>
    </citation>
    <scope>INTERACTION WITH FELINE ANPEP</scope>
</reference>
<keyword id="KW-0175">Coiled coil</keyword>
<keyword id="KW-0325">Glycoprotein</keyword>
<keyword id="KW-1043">Host membrane</keyword>
<keyword id="KW-0945">Host-virus interaction</keyword>
<keyword id="KW-0472">Membrane</keyword>
<keyword id="KW-1185">Reference proteome</keyword>
<keyword id="KW-0732">Signal</keyword>
<keyword id="KW-0812">Transmembrane</keyword>
<keyword id="KW-1133">Transmembrane helix</keyword>
<keyword id="KW-1161">Viral attachment to host cell</keyword>
<keyword id="KW-0261">Viral envelope protein</keyword>
<keyword id="KW-0946">Virion</keyword>
<keyword id="KW-0843">Virulence</keyword>
<keyword id="KW-1160">Virus entry into host cell</keyword>
<dbReference type="EMBL" id="X06170">
    <property type="protein sequence ID" value="CAA29535.1"/>
    <property type="molecule type" value="Genomic_RNA"/>
</dbReference>
<dbReference type="EMBL" id="DQ010921">
    <property type="protein sequence ID" value="AAY32596.1"/>
    <property type="molecule type" value="Genomic_RNA"/>
</dbReference>
<dbReference type="EMBL" id="AY994055">
    <property type="protein sequence ID" value="AAY16375.1"/>
    <property type="molecule type" value="Genomic_RNA"/>
</dbReference>
<dbReference type="PIR" id="A27171">
    <property type="entry name" value="VGIH79"/>
</dbReference>
<dbReference type="RefSeq" id="YP_004070194.1">
    <property type="nucleotide sequence ID" value="NC_002306.3"/>
</dbReference>
<dbReference type="SMR" id="P10033"/>
<dbReference type="GeneID" id="920849"/>
<dbReference type="KEGG" id="vg:920849"/>
<dbReference type="Proteomes" id="UP000000835">
    <property type="component" value="Segment"/>
</dbReference>
<dbReference type="Proteomes" id="UP000140386">
    <property type="component" value="Genome"/>
</dbReference>
<dbReference type="GO" id="GO:0044173">
    <property type="term" value="C:host cell endoplasmic reticulum-Golgi intermediate compartment membrane"/>
    <property type="evidence" value="ECO:0007669"/>
    <property type="project" value="UniProtKB-SubCell"/>
</dbReference>
<dbReference type="GO" id="GO:0016020">
    <property type="term" value="C:membrane"/>
    <property type="evidence" value="ECO:0007669"/>
    <property type="project" value="UniProtKB-UniRule"/>
</dbReference>
<dbReference type="GO" id="GO:0019031">
    <property type="term" value="C:viral envelope"/>
    <property type="evidence" value="ECO:0007669"/>
    <property type="project" value="UniProtKB-UniRule"/>
</dbReference>
<dbReference type="GO" id="GO:0055036">
    <property type="term" value="C:virion membrane"/>
    <property type="evidence" value="ECO:0007669"/>
    <property type="project" value="UniProtKB-SubCell"/>
</dbReference>
<dbReference type="GO" id="GO:0075509">
    <property type="term" value="P:endocytosis involved in viral entry into host cell"/>
    <property type="evidence" value="ECO:0007669"/>
    <property type="project" value="UniProtKB-UniRule"/>
</dbReference>
<dbReference type="GO" id="GO:0039654">
    <property type="term" value="P:fusion of virus membrane with host endosome membrane"/>
    <property type="evidence" value="ECO:0007669"/>
    <property type="project" value="UniProtKB-UniRule"/>
</dbReference>
<dbReference type="GO" id="GO:0019064">
    <property type="term" value="P:fusion of virus membrane with host plasma membrane"/>
    <property type="evidence" value="ECO:0007669"/>
    <property type="project" value="UniProtKB-UniRule"/>
</dbReference>
<dbReference type="GO" id="GO:0046813">
    <property type="term" value="P:receptor-mediated virion attachment to host cell"/>
    <property type="evidence" value="ECO:0007669"/>
    <property type="project" value="UniProtKB-UniRule"/>
</dbReference>
<dbReference type="CDD" id="cd22377">
    <property type="entry name" value="TGEV-like_Spike_SD1-2_S1-S2_S2"/>
    <property type="match status" value="1"/>
</dbReference>
<dbReference type="Gene3D" id="1.20.5.300">
    <property type="match status" value="2"/>
</dbReference>
<dbReference type="Gene3D" id="2.60.40.3130">
    <property type="match status" value="1"/>
</dbReference>
<dbReference type="HAMAP" id="MF_04200">
    <property type="entry name" value="ALPHA_CORONA_SPIKE"/>
    <property type="match status" value="1"/>
</dbReference>
<dbReference type="InterPro" id="IPR042552">
    <property type="entry name" value="ALPHA_CORONA_SPIKE"/>
</dbReference>
<dbReference type="InterPro" id="IPR043607">
    <property type="entry name" value="CoV_S1_C"/>
</dbReference>
<dbReference type="InterPro" id="IPR043473">
    <property type="entry name" value="S2_sf_CoV"/>
</dbReference>
<dbReference type="InterPro" id="IPR002551">
    <property type="entry name" value="Spike_S1_CoV"/>
</dbReference>
<dbReference type="InterPro" id="IPR002552">
    <property type="entry name" value="Spike_S2_CoV"/>
</dbReference>
<dbReference type="InterPro" id="IPR043614">
    <property type="entry name" value="Spike_S2_CoV_C"/>
</dbReference>
<dbReference type="InterPro" id="IPR044873">
    <property type="entry name" value="Spike_S2_CoV_HR1"/>
</dbReference>
<dbReference type="InterPro" id="IPR044874">
    <property type="entry name" value="Spike_S2_CoV_HR2"/>
</dbReference>
<dbReference type="Pfam" id="PF01600">
    <property type="entry name" value="CoV_S1"/>
    <property type="match status" value="1"/>
</dbReference>
<dbReference type="Pfam" id="PF19209">
    <property type="entry name" value="CoV_S1_C"/>
    <property type="match status" value="1"/>
</dbReference>
<dbReference type="Pfam" id="PF01601">
    <property type="entry name" value="CoV_S2"/>
    <property type="match status" value="1"/>
</dbReference>
<dbReference type="Pfam" id="PF19214">
    <property type="entry name" value="CoV_S2_C"/>
    <property type="match status" value="1"/>
</dbReference>
<dbReference type="SUPFAM" id="SSF111474">
    <property type="entry name" value="Coronavirus S2 glycoprotein"/>
    <property type="match status" value="2"/>
</dbReference>
<dbReference type="PROSITE" id="PS51923">
    <property type="entry name" value="COV_S2_HR1"/>
    <property type="match status" value="1"/>
</dbReference>
<dbReference type="PROSITE" id="PS51924">
    <property type="entry name" value="COV_S2_HR2"/>
    <property type="match status" value="1"/>
</dbReference>
<organismHost>
    <name type="scientific">Felidae</name>
    <name type="common">cat family</name>
    <dbReference type="NCBI Taxonomy" id="9681"/>
</organismHost>
<proteinExistence type="evidence at protein level"/>
<name>SPIKE_FIPV</name>
<sequence length="1452" mass="160470">MIVLVTCLLLLCSYHTVLSTTNNECIQVNVTQLAGNENLIRDFLFSNFKEEGSVVVGGYYPTEVWYNCSRTARTTAFQYFNNIHAFYFVMEAMENSTGNARGKPLLFHVHGEPVSVIISAYRDDVQQRPLLKHGLVCITKNRHINYEQFTSNQWNSTCTGADRKIPFSVIPTDNGTKIYGLEWNDDFVTAYISGRSYHLNINTNWFNNVTLLYSRSSTATWEYSAAYAYQGVSNFTYYKLNNTNGLKTYELCEDYEHCTGYATNVFAPTSGGYIPDGFSFNNWFLLTNSSTFVSGRFVTNQPLLINCLWPVPSFGVAAQEFCFEGAQFSQCNGVSLNNTVDVIRFNLNFTADVQSGMGATVFSLNTTGGVILEISCYSDTVSESSSYSYGEIPFGITDGPRYCYVLYNGTALKYLGTLPPSVKEIAISKWGHFYINGYNFFSTFPIGCISFNLTTGVSGAFWTIAYTSYTEALVQVENTAIKNVTYCNSHINNIKCSQLTANLNNGFYPVASSEVGFVNKSVVLLPSFFTYTAVNITIDLGMKLSGYGQPIASTLSNITLPMQDNNTDVYCIRSNQFSVYVHSTCKSSLWDNIFNQDCTDVLEATAVIKTGTCPFSFDKLNNYLTFNKFCLSLSPVGANCKFDVAARTRTNEQVVRSLYVIYEEGDNIVGVPSDNSGLHDLSVLHLDSCTDYNIYGRTGVGIIRRTNSTLLSGLYYTSLSGDLLGFKNVSDGVIYSVTPCDVSAQAAVIDGAIVGAMTSINSELLGLTHWTTTPNFYYYSIYNYTSERTRGTAIDSNDVDCEPVITYSNIGVCKNGALVFINVTHSDGDVQPISTGNVTIPTNFTISVQVEYMQVYTTPVSIDCARYVCNGNPRCNKLLTQYVSACQTIEQALAMGARLENMEVDSMLFVSENALKLASVEAFNSTENLDPIYKEWPSIGGSWLGGLKDILPSHNSKRKYGSAIEDLLFDKVVTSGLGTVDEDYKRCTGGYDIADLVCAQYYNGIMVLPGVANADKMTMYTASLAGGITLGALGGGAVAIPFAVAVQARLNYVALQTDVLNKNQQILANAFNQAIGNITQAFGKVNDAIHQTSQGLATVAKALAKVQDVVNTQGQALSHLTVQLQNNFQAISSSISDIYNRLDELSADAQVDRLITGRLTALNAFVSQTLTRQAEVRASRQLAKDKVNECVRSQSQRFGFCGNGTHLFSLANAAPNGMIFFHTVLLPTAYETVTAWSGICASDGDRTFGLVVKDVQLTLFRNLDDKFYLTPRTMYQPRVATSSDFVQIEGCDVLFVNATVIDLPSIIPDYIDINQTVQDILENYRPNWTVPEFTLDIFNATYLNLTGEIDDLEFRSEKLHNTTVELAILIDNINNTLVNLEWLNRIETYVKWPWYVWLLIGLVVVFCIPLLLFCCFSTGCCGCIGCLGSCCHSICSRRQFENYEPIEKVHVH</sequence>
<organism>
    <name type="scientific">Feline coronavirus (strain FIPV WSU-79/1146)</name>
    <name type="common">FCoV</name>
    <dbReference type="NCBI Taxonomy" id="33734"/>
    <lineage>
        <taxon>Viruses</taxon>
        <taxon>Riboviria</taxon>
        <taxon>Orthornavirae</taxon>
        <taxon>Pisuviricota</taxon>
        <taxon>Pisoniviricetes</taxon>
        <taxon>Nidovirales</taxon>
        <taxon>Cornidovirineae</taxon>
        <taxon>Coronaviridae</taxon>
        <taxon>Orthocoronavirinae</taxon>
        <taxon>Alphacoronavirus</taxon>
        <taxon>Tegacovirus</taxon>
        <taxon>Alphacoronavirus 1</taxon>
    </lineage>
</organism>
<feature type="signal peptide" evidence="1">
    <location>
        <begin position="1"/>
        <end position="32"/>
    </location>
</feature>
<feature type="chain" id="PRO_0000037183" description="Spike glycoprotein" evidence="1">
    <location>
        <begin position="33"/>
        <end position="1452"/>
    </location>
</feature>
<feature type="topological domain" description="Virion surface" evidence="1">
    <location>
        <begin position="33"/>
        <end position="1393"/>
    </location>
</feature>
<feature type="transmembrane region" description="Helical" evidence="1">
    <location>
        <begin position="1394"/>
        <end position="1413"/>
    </location>
</feature>
<feature type="topological domain" description="Intravirion" evidence="1">
    <location>
        <begin position="1414"/>
        <end position="1452"/>
    </location>
</feature>
<feature type="region of interest" description="S1" evidence="1">
    <location>
        <begin position="33"/>
        <end position="779"/>
    </location>
</feature>
<feature type="region of interest" description="Interaction with host ANPEP" evidence="1">
    <location>
        <begin position="660"/>
        <end position="804"/>
    </location>
</feature>
<feature type="region of interest" description="S2" evidence="1">
    <location>
        <begin position="780"/>
        <end position="1452"/>
    </location>
</feature>
<feature type="region of interest" description="Fusion peptide" evidence="1">
    <location>
        <begin position="1025"/>
        <end position="1046"/>
    </location>
</feature>
<feature type="region of interest" description="Heptad repeat 1 (HR1)" evidence="2">
    <location>
        <begin position="1040"/>
        <end position="1159"/>
    </location>
</feature>
<feature type="region of interest" description="Heptad repeat 2 (HR2)" evidence="3">
    <location>
        <begin position="1308"/>
        <end position="1405"/>
    </location>
</feature>
<feature type="coiled-coil region" evidence="1">
    <location>
        <begin position="1107"/>
        <end position="1151"/>
    </location>
</feature>
<feature type="coiled-coil region" evidence="1">
    <location>
        <begin position="1341"/>
        <end position="1383"/>
    </location>
</feature>
<feature type="short sequence motif" description="KxHxx" evidence="1">
    <location>
        <begin position="1448"/>
        <end position="1452"/>
    </location>
</feature>
<feature type="sequence variant">
    <original>A</original>
    <variation>V</variation>
    <location>
        <position position="744"/>
    </location>
</feature>
<feature type="sequence variant">
    <original>R</original>
    <variation>E</variation>
    <location>
        <position position="1325"/>
    </location>
</feature>